<accession>P81641</accession>
<accession>Q27578</accession>
<accession>Q27581</accession>
<accession>Q27585</accession>
<accession>Q27882</accession>
<accession>Q27885</accession>
<accession>Q27897</accession>
<accession>Q8WP56</accession>
<accession>Q95NK4</accession>
<accession>Q969D1</accession>
<accession>Q9BH39</accession>
<accession>Q9BH72</accession>
<accession>Q9BPS5</accession>
<accession>Q9BPS6</accession>
<accession>Q9BPS7</accession>
<accession>Q9BPS8</accession>
<accession>Q9BPT0</accession>
<accession>Q9BPT1</accession>
<accession>Q9BPT2</accession>
<accession>Q9BPT3</accession>
<accession>Q9V7Z0</accession>
<protein>
    <recommendedName>
        <fullName>Alpha-amylase B</fullName>
        <ecNumber evidence="2">3.2.1.1</ecNumber>
    </recommendedName>
    <alternativeName>
        <fullName>1,4-alpha-D-glucan glucanohydrolase</fullName>
    </alternativeName>
</protein>
<name>AMYB_DROME</name>
<reference key="1">
    <citation type="journal article" date="1988" name="Proc. Jpn. Acad., B, Phys. Biol. Sci.">
        <title>Nucleotide sequences of the duplicated Amylase structural genes in Drosophila melanogaster.</title>
        <authorList>
            <person name="Okuyama E."/>
            <person name="Yamazaki T."/>
        </authorList>
    </citation>
    <scope>NUCLEOTIDE SEQUENCE [GENOMIC DNA]</scope>
    <source>
        <strain>TN329</strain>
    </source>
</reference>
<reference key="2">
    <citation type="journal article" date="1995" name="Genetics">
        <title>Evolutionary relationships and sequence variation of alpha-amylase variants encoded by duplicated genes in the Amy locus of Drosophila melanogaster.</title>
        <authorList>
            <person name="Inomata N."/>
            <person name="Shibata H."/>
            <person name="Okuyama E."/>
            <person name="Yamazaki T."/>
        </authorList>
    </citation>
    <scope>NUCLEOTIDE SEQUENCE [GENOMIC DNA]</scope>
    <scope>POLYMORPHISM</scope>
    <source>
        <strain>1420#1</strain>
        <strain>AO168</strain>
        <strain>J87</strain>
        <strain>KO123</strain>
        <strain>KO140</strain>
        <strain>L16</strain>
        <strain>TN22</strain>
        <strain>TN256</strain>
        <strain>TN329</strain>
    </source>
</reference>
<reference key="3">
    <citation type="journal article" date="2001" name="Genetics">
        <title>Molecular evolution of duplicated amylase gene regions in Drosophila melanogaster: evidence of positive selection in the coding regions and selective constraints in the cis-regulatory regions.</title>
        <authorList>
            <person name="Araki H."/>
            <person name="Inomata N."/>
            <person name="Yamazaki T."/>
        </authorList>
    </citation>
    <scope>NUCLEOTIDE SEQUENCE [GENOMIC DNA]</scope>
    <source>
        <strain>JP-1</strain>
        <strain>JP-15</strain>
        <strain>JP-169</strain>
        <strain>JP-186</strain>
        <strain>JP-190</strain>
        <strain>JP-35</strain>
        <strain>JP-5</strain>
        <strain>JP-55</strain>
        <strain>JP-60</strain>
        <strain>JP-65</strain>
        <strain>JP-70</strain>
        <strain>JP-75</strain>
        <strain>JP-84</strain>
        <strain>KN-10</strain>
        <strain>KN-12</strain>
        <strain>KN-15</strain>
        <strain>KN-17</strain>
        <strain>KN-21</strain>
        <strain>KN-22</strain>
        <strain>KN-23</strain>
        <strain>KN-27</strain>
        <strain>KN-3</strain>
        <strain>KN-9</strain>
    </source>
</reference>
<reference key="4">
    <citation type="journal article" date="2000" name="Science">
        <title>The genome sequence of Drosophila melanogaster.</title>
        <authorList>
            <person name="Adams M.D."/>
            <person name="Celniker S.E."/>
            <person name="Holt R.A."/>
            <person name="Evans C.A."/>
            <person name="Gocayne J.D."/>
            <person name="Amanatides P.G."/>
            <person name="Scherer S.E."/>
            <person name="Li P.W."/>
            <person name="Hoskins R.A."/>
            <person name="Galle R.F."/>
            <person name="George R.A."/>
            <person name="Lewis S.E."/>
            <person name="Richards S."/>
            <person name="Ashburner M."/>
            <person name="Henderson S.N."/>
            <person name="Sutton G.G."/>
            <person name="Wortman J.R."/>
            <person name="Yandell M.D."/>
            <person name="Zhang Q."/>
            <person name="Chen L.X."/>
            <person name="Brandon R.C."/>
            <person name="Rogers Y.-H.C."/>
            <person name="Blazej R.G."/>
            <person name="Champe M."/>
            <person name="Pfeiffer B.D."/>
            <person name="Wan K.H."/>
            <person name="Doyle C."/>
            <person name="Baxter E.G."/>
            <person name="Helt G."/>
            <person name="Nelson C.R."/>
            <person name="Miklos G.L.G."/>
            <person name="Abril J.F."/>
            <person name="Agbayani A."/>
            <person name="An H.-J."/>
            <person name="Andrews-Pfannkoch C."/>
            <person name="Baldwin D."/>
            <person name="Ballew R.M."/>
            <person name="Basu A."/>
            <person name="Baxendale J."/>
            <person name="Bayraktaroglu L."/>
            <person name="Beasley E.M."/>
            <person name="Beeson K.Y."/>
            <person name="Benos P.V."/>
            <person name="Berman B.P."/>
            <person name="Bhandari D."/>
            <person name="Bolshakov S."/>
            <person name="Borkova D."/>
            <person name="Botchan M.R."/>
            <person name="Bouck J."/>
            <person name="Brokstein P."/>
            <person name="Brottier P."/>
            <person name="Burtis K.C."/>
            <person name="Busam D.A."/>
            <person name="Butler H."/>
            <person name="Cadieu E."/>
            <person name="Center A."/>
            <person name="Chandra I."/>
            <person name="Cherry J.M."/>
            <person name="Cawley S."/>
            <person name="Dahlke C."/>
            <person name="Davenport L.B."/>
            <person name="Davies P."/>
            <person name="de Pablos B."/>
            <person name="Delcher A."/>
            <person name="Deng Z."/>
            <person name="Mays A.D."/>
            <person name="Dew I."/>
            <person name="Dietz S.M."/>
            <person name="Dodson K."/>
            <person name="Doup L.E."/>
            <person name="Downes M."/>
            <person name="Dugan-Rocha S."/>
            <person name="Dunkov B.C."/>
            <person name="Dunn P."/>
            <person name="Durbin K.J."/>
            <person name="Evangelista C.C."/>
            <person name="Ferraz C."/>
            <person name="Ferriera S."/>
            <person name="Fleischmann W."/>
            <person name="Fosler C."/>
            <person name="Gabrielian A.E."/>
            <person name="Garg N.S."/>
            <person name="Gelbart W.M."/>
            <person name="Glasser K."/>
            <person name="Glodek A."/>
            <person name="Gong F."/>
            <person name="Gorrell J.H."/>
            <person name="Gu Z."/>
            <person name="Guan P."/>
            <person name="Harris M."/>
            <person name="Harris N.L."/>
            <person name="Harvey D.A."/>
            <person name="Heiman T.J."/>
            <person name="Hernandez J.R."/>
            <person name="Houck J."/>
            <person name="Hostin D."/>
            <person name="Houston K.A."/>
            <person name="Howland T.J."/>
            <person name="Wei M.-H."/>
            <person name="Ibegwam C."/>
            <person name="Jalali M."/>
            <person name="Kalush F."/>
            <person name="Karpen G.H."/>
            <person name="Ke Z."/>
            <person name="Kennison J.A."/>
            <person name="Ketchum K.A."/>
            <person name="Kimmel B.E."/>
            <person name="Kodira C.D."/>
            <person name="Kraft C.L."/>
            <person name="Kravitz S."/>
            <person name="Kulp D."/>
            <person name="Lai Z."/>
            <person name="Lasko P."/>
            <person name="Lei Y."/>
            <person name="Levitsky A.A."/>
            <person name="Li J.H."/>
            <person name="Li Z."/>
            <person name="Liang Y."/>
            <person name="Lin X."/>
            <person name="Liu X."/>
            <person name="Mattei B."/>
            <person name="McIntosh T.C."/>
            <person name="McLeod M.P."/>
            <person name="McPherson D."/>
            <person name="Merkulov G."/>
            <person name="Milshina N.V."/>
            <person name="Mobarry C."/>
            <person name="Morris J."/>
            <person name="Moshrefi A."/>
            <person name="Mount S.M."/>
            <person name="Moy M."/>
            <person name="Murphy B."/>
            <person name="Murphy L."/>
            <person name="Muzny D.M."/>
            <person name="Nelson D.L."/>
            <person name="Nelson D.R."/>
            <person name="Nelson K.A."/>
            <person name="Nixon K."/>
            <person name="Nusskern D.R."/>
            <person name="Pacleb J.M."/>
            <person name="Palazzolo M."/>
            <person name="Pittman G.S."/>
            <person name="Pan S."/>
            <person name="Pollard J."/>
            <person name="Puri V."/>
            <person name="Reese M.G."/>
            <person name="Reinert K."/>
            <person name="Remington K."/>
            <person name="Saunders R.D.C."/>
            <person name="Scheeler F."/>
            <person name="Shen H."/>
            <person name="Shue B.C."/>
            <person name="Siden-Kiamos I."/>
            <person name="Simpson M."/>
            <person name="Skupski M.P."/>
            <person name="Smith T.J."/>
            <person name="Spier E."/>
            <person name="Spradling A.C."/>
            <person name="Stapleton M."/>
            <person name="Strong R."/>
            <person name="Sun E."/>
            <person name="Svirskas R."/>
            <person name="Tector C."/>
            <person name="Turner R."/>
            <person name="Venter E."/>
            <person name="Wang A.H."/>
            <person name="Wang X."/>
            <person name="Wang Z.-Y."/>
            <person name="Wassarman D.A."/>
            <person name="Weinstock G.M."/>
            <person name="Weissenbach J."/>
            <person name="Williams S.M."/>
            <person name="Woodage T."/>
            <person name="Worley K.C."/>
            <person name="Wu D."/>
            <person name="Yang S."/>
            <person name="Yao Q.A."/>
            <person name="Ye J."/>
            <person name="Yeh R.-F."/>
            <person name="Zaveri J.S."/>
            <person name="Zhan M."/>
            <person name="Zhang G."/>
            <person name="Zhao Q."/>
            <person name="Zheng L."/>
            <person name="Zheng X.H."/>
            <person name="Zhong F.N."/>
            <person name="Zhong W."/>
            <person name="Zhou X."/>
            <person name="Zhu S.C."/>
            <person name="Zhu X."/>
            <person name="Smith H.O."/>
            <person name="Gibbs R.A."/>
            <person name="Myers E.W."/>
            <person name="Rubin G.M."/>
            <person name="Venter J.C."/>
        </authorList>
    </citation>
    <scope>NUCLEOTIDE SEQUENCE [LARGE SCALE GENOMIC DNA]</scope>
    <source>
        <strain>Berkeley</strain>
    </source>
</reference>
<reference key="5">
    <citation type="journal article" date="2002" name="Genome Biol.">
        <title>Annotation of the Drosophila melanogaster euchromatic genome: a systematic review.</title>
        <authorList>
            <person name="Misra S."/>
            <person name="Crosby M.A."/>
            <person name="Mungall C.J."/>
            <person name="Matthews B.B."/>
            <person name="Campbell K.S."/>
            <person name="Hradecky P."/>
            <person name="Huang Y."/>
            <person name="Kaminker J.S."/>
            <person name="Millburn G.H."/>
            <person name="Prochnik S.E."/>
            <person name="Smith C.D."/>
            <person name="Tupy J.L."/>
            <person name="Whitfield E.J."/>
            <person name="Bayraktaroglu L."/>
            <person name="Berman B.P."/>
            <person name="Bettencourt B.R."/>
            <person name="Celniker S.E."/>
            <person name="de Grey A.D.N.J."/>
            <person name="Drysdale R.A."/>
            <person name="Harris N.L."/>
            <person name="Richter J."/>
            <person name="Russo S."/>
            <person name="Schroeder A.J."/>
            <person name="Shu S.Q."/>
            <person name="Stapleton M."/>
            <person name="Yamada C."/>
            <person name="Ashburner M."/>
            <person name="Gelbart W.M."/>
            <person name="Rubin G.M."/>
            <person name="Lewis S.E."/>
        </authorList>
    </citation>
    <scope>GENOME REANNOTATION</scope>
    <source>
        <strain>Berkeley</strain>
    </source>
</reference>
<reference key="6">
    <citation type="journal article" date="1986" name="Nucleic Acids Res.">
        <title>The alpha-amylase gene in Drosophila melanogaster: nucleotide sequence, gene structure and expression motifs.</title>
        <authorList>
            <person name="Boer P.H."/>
            <person name="Hickey D.A."/>
        </authorList>
    </citation>
    <scope>NUCLEOTIDE SEQUENCE [GENOMIC DNA] OF 1-22</scope>
    <source>
        <strain>Oregon-R</strain>
    </source>
</reference>
<reference key="7">
    <citation type="journal article" date="1992" name="Biochem. Genet.">
        <title>Molecular analysis of cis-regulatory sequences at the alpha-amylase locus in Drosophila melanogaster.</title>
        <authorList>
            <person name="Hawley S.A."/>
            <person name="Doane W.W."/>
            <person name="Norman R.A."/>
        </authorList>
    </citation>
    <scope>NUCLEOTIDE SEQUENCE [GENOMIC DNA] OF 1-13</scope>
    <source>
        <strain>Canton-S</strain>
    </source>
</reference>
<gene>
    <name type="primary">Amy-d</name>
    <name type="synonym">AmyB</name>
    <name type="ORF">CG17876</name>
</gene>
<sequence length="494" mass="53795">MFLAKSIVCLALLAVANAQFDTNYASGRSGMVHLFEWKWDDIAAECENFLGPNGYAGVQVSPVNENAVKDSRPWWERYQPISYKLETRSGNEEQFASMVKRCNAVGVRTYVDVVFNHMAADGGTYGTGGSTASPSSKSYPGVPYSSLDFNPTCAISNYNDANEVRNCELVGLRDLNQGNSYVQDKVVEFLDHLIDLGVAGFRVDAAKHMWPADLAVIYGRLKNLNTDHGFASGSKAYIVQEVIDMGGEAISKSEYTGLGAITEFRHSDSIGKVFRGKDQLQYLTNWGTAWGFAASDRSLVFVDNHDNQRGHGAGGADVLTYKVPKQYKMASAFMLAHPFGTPRVMSSFSFTDTDQGPPTTDGHNIASPIFNSDNSCSGGWVCEHRWRQIYNMVAFRNTVGSDEIQNWWDNGSNQISFSRGSRGFVAFNNDNYDLNSSLQTGLPAGTYCDVISGSKSGSSCTGKTVTVGSDGRASIYIGSSEDDGVLAIHVNAKL</sequence>
<dbReference type="EC" id="3.2.1.1" evidence="2"/>
<dbReference type="EMBL" id="X84405">
    <property type="protein sequence ID" value="CAA59126.1"/>
    <property type="molecule type" value="Genomic_DNA"/>
</dbReference>
<dbReference type="EMBL" id="L22717">
    <property type="protein sequence ID" value="AAA92227.1"/>
    <property type="molecule type" value="Genomic_DNA"/>
</dbReference>
<dbReference type="EMBL" id="L22718">
    <property type="protein sequence ID" value="AAA92228.1"/>
    <property type="molecule type" value="Genomic_DNA"/>
</dbReference>
<dbReference type="EMBL" id="L22720">
    <property type="protein sequence ID" value="AAA92230.1"/>
    <property type="molecule type" value="Genomic_DNA"/>
</dbReference>
<dbReference type="EMBL" id="L22724">
    <property type="protein sequence ID" value="AAA92232.1"/>
    <property type="molecule type" value="Genomic_DNA"/>
</dbReference>
<dbReference type="EMBL" id="L22727">
    <property type="protein sequence ID" value="AAA92233.1"/>
    <property type="molecule type" value="Genomic_DNA"/>
</dbReference>
<dbReference type="EMBL" id="L22728">
    <property type="protein sequence ID" value="AAA92242.1"/>
    <property type="molecule type" value="Genomic_DNA"/>
</dbReference>
<dbReference type="EMBL" id="L22730">
    <property type="protein sequence ID" value="AAA92237.1"/>
    <property type="molecule type" value="Genomic_DNA"/>
</dbReference>
<dbReference type="EMBL" id="L22732">
    <property type="protein sequence ID" value="AAA92243.1"/>
    <property type="molecule type" value="Genomic_DNA"/>
</dbReference>
<dbReference type="EMBL" id="L22734">
    <property type="protein sequence ID" value="AAA92238.1"/>
    <property type="molecule type" value="Genomic_DNA"/>
</dbReference>
<dbReference type="EMBL" id="AB043027">
    <property type="protein sequence ID" value="BAB32525.1"/>
    <property type="molecule type" value="Genomic_DNA"/>
</dbReference>
<dbReference type="EMBL" id="AB043028">
    <property type="protein sequence ID" value="BAB32526.1"/>
    <property type="molecule type" value="Genomic_DNA"/>
</dbReference>
<dbReference type="EMBL" id="AB043029">
    <property type="protein sequence ID" value="BAB32527.1"/>
    <property type="molecule type" value="Genomic_DNA"/>
</dbReference>
<dbReference type="EMBL" id="AB043030">
    <property type="protein sequence ID" value="BAB32528.1"/>
    <property type="molecule type" value="Genomic_DNA"/>
</dbReference>
<dbReference type="EMBL" id="AB043031">
    <property type="protein sequence ID" value="BAB32529.1"/>
    <property type="molecule type" value="Genomic_DNA"/>
</dbReference>
<dbReference type="EMBL" id="AB043032">
    <property type="protein sequence ID" value="BAB32530.1"/>
    <property type="molecule type" value="Genomic_DNA"/>
</dbReference>
<dbReference type="EMBL" id="AB043033">
    <property type="protein sequence ID" value="BAB32531.1"/>
    <property type="molecule type" value="Genomic_DNA"/>
</dbReference>
<dbReference type="EMBL" id="AB043034">
    <property type="protein sequence ID" value="BAB32532.1"/>
    <property type="molecule type" value="Genomic_DNA"/>
</dbReference>
<dbReference type="EMBL" id="AB043035">
    <property type="protein sequence ID" value="BAB32533.1"/>
    <property type="molecule type" value="Genomic_DNA"/>
</dbReference>
<dbReference type="EMBL" id="AB043036">
    <property type="protein sequence ID" value="BAB32534.1"/>
    <property type="molecule type" value="Genomic_DNA"/>
</dbReference>
<dbReference type="EMBL" id="AB043037">
    <property type="protein sequence ID" value="BAB32535.1"/>
    <property type="molecule type" value="Genomic_DNA"/>
</dbReference>
<dbReference type="EMBL" id="AB043039">
    <property type="protein sequence ID" value="BAB32537.1"/>
    <property type="molecule type" value="Genomic_DNA"/>
</dbReference>
<dbReference type="EMBL" id="AB043040">
    <property type="protein sequence ID" value="BAB32538.1"/>
    <property type="molecule type" value="Genomic_DNA"/>
</dbReference>
<dbReference type="EMBL" id="AB043041">
    <property type="protein sequence ID" value="BAB32539.1"/>
    <property type="molecule type" value="Genomic_DNA"/>
</dbReference>
<dbReference type="EMBL" id="AB043042">
    <property type="protein sequence ID" value="BAB32540.1"/>
    <property type="molecule type" value="Genomic_DNA"/>
</dbReference>
<dbReference type="EMBL" id="AB043043">
    <property type="protein sequence ID" value="BAB32541.1"/>
    <property type="molecule type" value="Genomic_DNA"/>
</dbReference>
<dbReference type="EMBL" id="AB043044">
    <property type="protein sequence ID" value="BAB32542.1"/>
    <property type="molecule type" value="Genomic_DNA"/>
</dbReference>
<dbReference type="EMBL" id="AB043045">
    <property type="protein sequence ID" value="BAB32543.1"/>
    <property type="molecule type" value="Genomic_DNA"/>
</dbReference>
<dbReference type="EMBL" id="AB043046">
    <property type="protein sequence ID" value="BAB32544.1"/>
    <property type="molecule type" value="Genomic_DNA"/>
</dbReference>
<dbReference type="EMBL" id="AB043047">
    <property type="protein sequence ID" value="BAB32545.1"/>
    <property type="molecule type" value="Genomic_DNA"/>
</dbReference>
<dbReference type="EMBL" id="AB043049">
    <property type="protein sequence ID" value="BAB72141.1"/>
    <property type="molecule type" value="Genomic_DNA"/>
</dbReference>
<dbReference type="EMBL" id="AB043050">
    <property type="protein sequence ID" value="BAB72142.1"/>
    <property type="molecule type" value="Genomic_DNA"/>
</dbReference>
<dbReference type="EMBL" id="AB043051">
    <property type="protein sequence ID" value="BAB72143.1"/>
    <property type="molecule type" value="Genomic_DNA"/>
</dbReference>
<dbReference type="EMBL" id="AE013599">
    <property type="protein sequence ID" value="AAF57894.1"/>
    <property type="molecule type" value="Genomic_DNA"/>
</dbReference>
<dbReference type="EMBL" id="X04570">
    <property type="protein sequence ID" value="CAA28239.1"/>
    <property type="molecule type" value="Genomic_DNA"/>
</dbReference>
<dbReference type="EMBL" id="X84410">
    <property type="protein sequence ID" value="CAA59130.1"/>
    <property type="molecule type" value="Genomic_DNA"/>
</dbReference>
<dbReference type="PIR" id="S58951">
    <property type="entry name" value="S58951"/>
</dbReference>
<dbReference type="PIR" id="S58954">
    <property type="entry name" value="S58954"/>
</dbReference>
<dbReference type="PIR" id="S58959">
    <property type="entry name" value="S58959"/>
</dbReference>
<dbReference type="PIR" id="S58960">
    <property type="entry name" value="S58960"/>
</dbReference>
<dbReference type="PIR" id="S58962">
    <property type="entry name" value="S58962"/>
</dbReference>
<dbReference type="PIR" id="S58964">
    <property type="entry name" value="S58964"/>
</dbReference>
<dbReference type="RefSeq" id="NP_523768.1">
    <property type="nucleotide sequence ID" value="NM_079044.2"/>
</dbReference>
<dbReference type="SMR" id="P81641"/>
<dbReference type="BioGRID" id="62629">
    <property type="interactions" value="2"/>
</dbReference>
<dbReference type="FunCoup" id="P81641">
    <property type="interactions" value="31"/>
</dbReference>
<dbReference type="IntAct" id="P81641">
    <property type="interactions" value="2"/>
</dbReference>
<dbReference type="STRING" id="7227.FBpp0311627"/>
<dbReference type="CAZy" id="GH13">
    <property type="family name" value="Glycoside Hydrolase Family 13"/>
</dbReference>
<dbReference type="PaxDb" id="7227-FBpp0086155"/>
<dbReference type="DNASU" id="36932"/>
<dbReference type="GeneID" id="36932"/>
<dbReference type="KEGG" id="dme:Dmel_CG17876"/>
<dbReference type="AGR" id="FB:FBgn0000078"/>
<dbReference type="CTD" id="36932"/>
<dbReference type="FlyBase" id="FBgn0000078">
    <property type="gene designation" value="Amy-d"/>
</dbReference>
<dbReference type="VEuPathDB" id="VectorBase:FBgn0000079"/>
<dbReference type="eggNOG" id="KOG2212">
    <property type="taxonomic scope" value="Eukaryota"/>
</dbReference>
<dbReference type="HOGENOM" id="CLU_013336_2_1_1"/>
<dbReference type="InParanoid" id="P81641"/>
<dbReference type="OrthoDB" id="550577at2759"/>
<dbReference type="Reactome" id="R-DME-189085">
    <property type="pathway name" value="Digestion of dietary carbohydrate"/>
</dbReference>
<dbReference type="BioGRID-ORCS" id="36932">
    <property type="hits" value="0 hits in 3 CRISPR screens"/>
</dbReference>
<dbReference type="GenomeRNAi" id="36932"/>
<dbReference type="PRO" id="PR:P81641"/>
<dbReference type="Proteomes" id="UP000000803">
    <property type="component" value="Chromosome 2R"/>
</dbReference>
<dbReference type="ExpressionAtlas" id="P81641">
    <property type="expression patterns" value="baseline and differential"/>
</dbReference>
<dbReference type="GO" id="GO:0005615">
    <property type="term" value="C:extracellular space"/>
    <property type="evidence" value="ECO:0000318"/>
    <property type="project" value="GO_Central"/>
</dbReference>
<dbReference type="GO" id="GO:0004556">
    <property type="term" value="F:alpha-amylase activity"/>
    <property type="evidence" value="ECO:0000304"/>
    <property type="project" value="UniProtKB"/>
</dbReference>
<dbReference type="GO" id="GO:0005509">
    <property type="term" value="F:calcium ion binding"/>
    <property type="evidence" value="ECO:0000304"/>
    <property type="project" value="UniProtKB"/>
</dbReference>
<dbReference type="GO" id="GO:0005975">
    <property type="term" value="P:carbohydrate metabolic process"/>
    <property type="evidence" value="ECO:0000318"/>
    <property type="project" value="GO_Central"/>
</dbReference>
<dbReference type="CDD" id="cd11317">
    <property type="entry name" value="AmyAc_bac_euk_AmyA"/>
    <property type="match status" value="1"/>
</dbReference>
<dbReference type="FunFam" id="2.60.40.1180:FF:000020">
    <property type="entry name" value="Pancreatic alpha-amylase"/>
    <property type="match status" value="1"/>
</dbReference>
<dbReference type="FunFam" id="3.20.20.80:FF:000056">
    <property type="entry name" value="Pancreatic alpha-amylase"/>
    <property type="match status" value="1"/>
</dbReference>
<dbReference type="Gene3D" id="3.20.20.80">
    <property type="entry name" value="Glycosidases"/>
    <property type="match status" value="1"/>
</dbReference>
<dbReference type="Gene3D" id="2.60.40.1180">
    <property type="entry name" value="Golgi alpha-mannosidase II"/>
    <property type="match status" value="1"/>
</dbReference>
<dbReference type="InterPro" id="IPR006048">
    <property type="entry name" value="A-amylase/branching_C"/>
</dbReference>
<dbReference type="InterPro" id="IPR031319">
    <property type="entry name" value="A-amylase_C"/>
</dbReference>
<dbReference type="InterPro" id="IPR006046">
    <property type="entry name" value="Alpha_amylase"/>
</dbReference>
<dbReference type="InterPro" id="IPR006047">
    <property type="entry name" value="Glyco_hydro_13_cat_dom"/>
</dbReference>
<dbReference type="InterPro" id="IPR013780">
    <property type="entry name" value="Glyco_hydro_b"/>
</dbReference>
<dbReference type="InterPro" id="IPR017853">
    <property type="entry name" value="Glycoside_hydrolase_SF"/>
</dbReference>
<dbReference type="PANTHER" id="PTHR43447">
    <property type="entry name" value="ALPHA-AMYLASE"/>
    <property type="match status" value="1"/>
</dbReference>
<dbReference type="Pfam" id="PF00128">
    <property type="entry name" value="Alpha-amylase"/>
    <property type="match status" value="1"/>
</dbReference>
<dbReference type="Pfam" id="PF02806">
    <property type="entry name" value="Alpha-amylase_C"/>
    <property type="match status" value="1"/>
</dbReference>
<dbReference type="PRINTS" id="PR00110">
    <property type="entry name" value="ALPHAAMYLASE"/>
</dbReference>
<dbReference type="SMART" id="SM00642">
    <property type="entry name" value="Aamy"/>
    <property type="match status" value="1"/>
</dbReference>
<dbReference type="SMART" id="SM00632">
    <property type="entry name" value="Aamy_C"/>
    <property type="match status" value="1"/>
</dbReference>
<dbReference type="SUPFAM" id="SSF51445">
    <property type="entry name" value="(Trans)glycosidases"/>
    <property type="match status" value="1"/>
</dbReference>
<dbReference type="SUPFAM" id="SSF51011">
    <property type="entry name" value="Glycosyl hydrolase domain"/>
    <property type="match status" value="1"/>
</dbReference>
<feature type="signal peptide">
    <location>
        <begin position="1"/>
        <end position="18"/>
    </location>
</feature>
<feature type="chain" id="PRO_0000001365" description="Alpha-amylase B">
    <location>
        <begin position="19"/>
        <end position="494"/>
    </location>
</feature>
<feature type="active site" description="Nucleophile" evidence="2">
    <location>
        <position position="204"/>
    </location>
</feature>
<feature type="active site" description="Proton donor" evidence="2">
    <location>
        <position position="241"/>
    </location>
</feature>
<feature type="binding site" evidence="2">
    <location>
        <position position="116"/>
    </location>
    <ligand>
        <name>Ca(2+)</name>
        <dbReference type="ChEBI" id="CHEBI:29108"/>
    </ligand>
</feature>
<feature type="binding site" evidence="2">
    <location>
        <position position="165"/>
    </location>
    <ligand>
        <name>Ca(2+)</name>
        <dbReference type="ChEBI" id="CHEBI:29108"/>
    </ligand>
</feature>
<feature type="binding site" evidence="2">
    <location>
        <position position="174"/>
    </location>
    <ligand>
        <name>Ca(2+)</name>
        <dbReference type="ChEBI" id="CHEBI:29108"/>
    </ligand>
</feature>
<feature type="binding site" evidence="2">
    <location>
        <position position="202"/>
    </location>
    <ligand>
        <name>chloride</name>
        <dbReference type="ChEBI" id="CHEBI:17996"/>
    </ligand>
</feature>
<feature type="binding site" evidence="2">
    <location>
        <position position="208"/>
    </location>
    <ligand>
        <name>Ca(2+)</name>
        <dbReference type="ChEBI" id="CHEBI:29108"/>
    </ligand>
</feature>
<feature type="binding site" evidence="2">
    <location>
        <position position="304"/>
    </location>
    <ligand>
        <name>chloride</name>
        <dbReference type="ChEBI" id="CHEBI:17996"/>
    </ligand>
</feature>
<feature type="binding site" evidence="2">
    <location>
        <position position="343"/>
    </location>
    <ligand>
        <name>chloride</name>
        <dbReference type="ChEBI" id="CHEBI:17996"/>
    </ligand>
</feature>
<feature type="site" description="Transition state stabilizer" evidence="2">
    <location>
        <position position="306"/>
    </location>
</feature>
<feature type="modified residue" description="Pyrrolidone carboxylic acid" evidence="1">
    <location>
        <position position="19"/>
    </location>
</feature>
<feature type="disulfide bond" evidence="2">
    <location>
        <begin position="46"/>
        <end position="102"/>
    </location>
</feature>
<feature type="disulfide bond" evidence="2">
    <location>
        <begin position="153"/>
        <end position="167"/>
    </location>
</feature>
<feature type="disulfide bond" evidence="2">
    <location>
        <begin position="376"/>
        <end position="382"/>
    </location>
</feature>
<feature type="disulfide bond" evidence="2">
    <location>
        <begin position="448"/>
        <end position="460"/>
    </location>
</feature>
<feature type="sequence variant" description="In strain: KN-22.">
    <location>
        <position position="6"/>
    </location>
</feature>
<feature type="sequence variant" description="In strain: Berkeley, JP-5, JP-35, JP-55, JP-75, KN-12 and Oregon-R.">
    <original>A</original>
    <variation>S</variation>
    <location>
        <position position="11"/>
    </location>
</feature>
<feature type="sequence variant" description="In strain: 1420#1, JP-169, JP-186, JP-190, KO123, KN-3, KN-9, KN-10, TN22 and TN256.">
    <original>S</original>
    <variation>R</variation>
    <location>
        <position position="71"/>
    </location>
</feature>
<feature type="sequence variant" description="In strain: JP-55.">
    <original>D</original>
    <variation>E</variation>
    <location>
        <position position="121"/>
    </location>
</feature>
<feature type="sequence variant" description="In strain: 1420#1, JP-190, JP-169, JP-186, KO123, TN22 and TN256.">
    <original>D</original>
    <variation>G</variation>
    <location>
        <position position="121"/>
    </location>
</feature>
<feature type="sequence variant" description="In strain: KN-10, KN-3 and KN-9.">
    <original>D</original>
    <variation>N</variation>
    <location>
        <position position="121"/>
    </location>
</feature>
<feature type="sequence variant" description="In strain: JP-75, KN-17, KN-21, KN-22 and L16.">
    <original>S</original>
    <variation>T</variation>
    <location>
        <position position="138"/>
    </location>
</feature>
<feature type="sequence variant" description="In strain: 1420#1, JP-169, JP-186, JP-190, KO123, KN-3, KN-9, KN-10, TN22 and TN256.">
    <original>S</original>
    <variation>R</variation>
    <location>
        <position position="156"/>
    </location>
</feature>
<feature type="sequence variant" description="In strain: 1420#1, AO168, J87, JP-60, JP-169, JP-186, JP-190, KO123, KN-3, KN-9, KN-10, TN22 and TN256.">
    <original>D</original>
    <variation>N</variation>
    <location>
        <position position="278"/>
    </location>
</feature>
<feature type="sequence variant" description="In strain: KN-15.">
    <original>T</original>
    <variation>I</variation>
    <location>
        <position position="288"/>
    </location>
</feature>
<feature type="sequence variant" description="In strain: Berkeley, JP-5, JP-35, JP-55, JP-60, JP-65, JP-70, JP-75, JP-169, JP-186, JP-190, KN-3, KN-9, KN-10, KN-12, KN-17, KN-21 and KN-23.">
    <original>T</original>
    <variation>A</variation>
    <location>
        <position position="398"/>
    </location>
</feature>
<feature type="sequence variant" description="In strain: Berkeley, JP-5, JP-35, JP-55, JP-65, JP-70, KN-12 and KN-21.">
    <original>S</original>
    <variation>L</variation>
    <location>
        <position position="401"/>
    </location>
</feature>
<feature type="sequence variant" description="In strain: 1420#1, AO168, J87, JP-60, JP-169, JP-186, JP-190, KO123, KN-3, KN-9, KN-10, TN22 and TN256.">
    <original>E</original>
    <variation>A</variation>
    <location>
        <position position="403"/>
    </location>
</feature>
<feature type="sequence variant" description="In strain: Berkeley, JP-5, JP-35, JP-55, JP-65 and KN-12.">
    <original>N</original>
    <variation>S</variation>
    <location>
        <position position="410"/>
    </location>
</feature>
<feature type="sequence variant" description="In strain: JP-1, JP-15, JP-84, KO140 and KN-27.">
    <original>V</original>
    <variation>I</variation>
    <location>
        <position position="465"/>
    </location>
</feature>
<feature type="sequence variant" description="In strain: 1420#1, AO168, J87, JP-1, JP-15, JP-55, JP-60, JP-75, JP-84, JP-169, JP-186, JP-190, KO123, KO140, KN-3, KN-9, KN-10, KN-15, KN-17, KN-21, KN-22, KN-23, KN-27, L16, TN22 and TN256.">
    <original>Y</original>
    <variation>N</variation>
    <location>
        <position position="476"/>
    </location>
</feature>
<feature type="sequence variant" description="In strain: KN-21.">
    <original>G</original>
    <variation>A</variation>
    <location>
        <position position="478"/>
    </location>
</feature>
<comment type="catalytic activity">
    <reaction evidence="2">
        <text>Endohydrolysis of (1-&gt;4)-alpha-D-glucosidic linkages in polysaccharides containing three or more (1-&gt;4)-alpha-linked D-glucose units.</text>
        <dbReference type="EC" id="3.2.1.1"/>
    </reaction>
</comment>
<comment type="cofactor">
    <cofactor evidence="2">
        <name>Ca(2+)</name>
        <dbReference type="ChEBI" id="CHEBI:29108"/>
    </cofactor>
    <text evidence="2">Binds 1 Ca(2+) ion per subunit.</text>
</comment>
<comment type="cofactor">
    <cofactor evidence="2">
        <name>chloride</name>
        <dbReference type="ChEBI" id="CHEBI:17996"/>
    </cofactor>
    <text evidence="2">Binds 1 Cl(-) ion per subunit.</text>
</comment>
<comment type="subunit">
    <text evidence="1">Monomer.</text>
</comment>
<comment type="polymorphism">
    <text evidence="3">At least 6 electrophoretic isozymes are known: Amy1, Amy2, Amy3, Amy4, Amy5 and Amy6. Strains KO123 expresses Amy1; J87 expresses Amy3; 1420#1, L16 and TN256 express Amy6.</text>
</comment>
<comment type="similarity">
    <text evidence="4">Belongs to the glycosyl hydrolase 13 family.</text>
</comment>
<evidence type="ECO:0000250" key="1"/>
<evidence type="ECO:0000250" key="2">
    <source>
        <dbReference type="UniProtKB" id="P04746"/>
    </source>
</evidence>
<evidence type="ECO:0000269" key="3">
    <source>
    </source>
</evidence>
<evidence type="ECO:0000305" key="4"/>
<organism>
    <name type="scientific">Drosophila melanogaster</name>
    <name type="common">Fruit fly</name>
    <dbReference type="NCBI Taxonomy" id="7227"/>
    <lineage>
        <taxon>Eukaryota</taxon>
        <taxon>Metazoa</taxon>
        <taxon>Ecdysozoa</taxon>
        <taxon>Arthropoda</taxon>
        <taxon>Hexapoda</taxon>
        <taxon>Insecta</taxon>
        <taxon>Pterygota</taxon>
        <taxon>Neoptera</taxon>
        <taxon>Endopterygota</taxon>
        <taxon>Diptera</taxon>
        <taxon>Brachycera</taxon>
        <taxon>Muscomorpha</taxon>
        <taxon>Ephydroidea</taxon>
        <taxon>Drosophilidae</taxon>
        <taxon>Drosophila</taxon>
        <taxon>Sophophora</taxon>
    </lineage>
</organism>
<proteinExistence type="inferred from homology"/>
<keyword id="KW-0106">Calcium</keyword>
<keyword id="KW-0119">Carbohydrate metabolism</keyword>
<keyword id="KW-0868">Chloride</keyword>
<keyword id="KW-1015">Disulfide bond</keyword>
<keyword id="KW-0326">Glycosidase</keyword>
<keyword id="KW-0378">Hydrolase</keyword>
<keyword id="KW-0479">Metal-binding</keyword>
<keyword id="KW-0873">Pyrrolidone carboxylic acid</keyword>
<keyword id="KW-1185">Reference proteome</keyword>
<keyword id="KW-0732">Signal</keyword>